<feature type="chain" id="PRO_0000313068" description="Probable [Fe-S]-dependent transcriptional repressor">
    <location>
        <begin position="1"/>
        <end position="78"/>
    </location>
</feature>
<feature type="binding site" evidence="1">
    <location>
        <position position="56"/>
    </location>
    <ligand>
        <name>iron-sulfur cluster</name>
        <dbReference type="ChEBI" id="CHEBI:30408"/>
    </ligand>
</feature>
<feature type="binding site" evidence="1">
    <location>
        <position position="61"/>
    </location>
    <ligand>
        <name>iron-sulfur cluster</name>
        <dbReference type="ChEBI" id="CHEBI:30408"/>
    </ligand>
</feature>
<feature type="binding site" evidence="1">
    <location>
        <position position="64"/>
    </location>
    <ligand>
        <name>iron-sulfur cluster</name>
        <dbReference type="ChEBI" id="CHEBI:30408"/>
    </ligand>
</feature>
<feature type="binding site" evidence="1">
    <location>
        <position position="70"/>
    </location>
    <ligand>
        <name>iron-sulfur cluster</name>
        <dbReference type="ChEBI" id="CHEBI:30408"/>
    </ligand>
</feature>
<evidence type="ECO:0000255" key="1">
    <source>
        <dbReference type="HAMAP-Rule" id="MF_01586"/>
    </source>
</evidence>
<name>FEOC_SHIBS</name>
<accession>Q31VM2</accession>
<comment type="function">
    <text evidence="1">May function as a transcriptional regulator that controls feoABC expression.</text>
</comment>
<comment type="similarity">
    <text evidence="1">Belongs to the FeoC family.</text>
</comment>
<protein>
    <recommendedName>
        <fullName evidence="1">Probable [Fe-S]-dependent transcriptional repressor</fullName>
    </recommendedName>
</protein>
<proteinExistence type="inferred from homology"/>
<keyword id="KW-0238">DNA-binding</keyword>
<keyword id="KW-0408">Iron</keyword>
<keyword id="KW-0411">Iron-sulfur</keyword>
<keyword id="KW-0479">Metal-binding</keyword>
<keyword id="KW-0678">Repressor</keyword>
<keyword id="KW-0804">Transcription</keyword>
<keyword id="KW-0805">Transcription regulation</keyword>
<dbReference type="EMBL" id="CP000036">
    <property type="protein sequence ID" value="ABB67886.1"/>
    <property type="molecule type" value="Genomic_DNA"/>
</dbReference>
<dbReference type="RefSeq" id="WP_000157586.1">
    <property type="nucleotide sequence ID" value="NC_007613.1"/>
</dbReference>
<dbReference type="SMR" id="Q31VM2"/>
<dbReference type="GeneID" id="86948257"/>
<dbReference type="KEGG" id="sbo:SBO_3399"/>
<dbReference type="HOGENOM" id="CLU_189182_0_0_6"/>
<dbReference type="Proteomes" id="UP000007067">
    <property type="component" value="Chromosome"/>
</dbReference>
<dbReference type="GO" id="GO:0003677">
    <property type="term" value="F:DNA binding"/>
    <property type="evidence" value="ECO:0007669"/>
    <property type="project" value="UniProtKB-KW"/>
</dbReference>
<dbReference type="GO" id="GO:0005506">
    <property type="term" value="F:iron ion binding"/>
    <property type="evidence" value="ECO:0007669"/>
    <property type="project" value="UniProtKB-UniRule"/>
</dbReference>
<dbReference type="GO" id="GO:0051536">
    <property type="term" value="F:iron-sulfur cluster binding"/>
    <property type="evidence" value="ECO:0007669"/>
    <property type="project" value="UniProtKB-KW"/>
</dbReference>
<dbReference type="Gene3D" id="1.10.10.10">
    <property type="entry name" value="Winged helix-like DNA-binding domain superfamily/Winged helix DNA-binding domain"/>
    <property type="match status" value="1"/>
</dbReference>
<dbReference type="HAMAP" id="MF_01586">
    <property type="entry name" value="FeoC"/>
    <property type="match status" value="1"/>
</dbReference>
<dbReference type="InterPro" id="IPR023732">
    <property type="entry name" value="FeoC"/>
</dbReference>
<dbReference type="InterPro" id="IPR015102">
    <property type="entry name" value="Tscrpt_reg_HTH_FeoC"/>
</dbReference>
<dbReference type="InterPro" id="IPR036388">
    <property type="entry name" value="WH-like_DNA-bd_sf"/>
</dbReference>
<dbReference type="InterPro" id="IPR036390">
    <property type="entry name" value="WH_DNA-bd_sf"/>
</dbReference>
<dbReference type="NCBIfam" id="NF011960">
    <property type="entry name" value="PRK15431.1"/>
    <property type="match status" value="1"/>
</dbReference>
<dbReference type="Pfam" id="PF09012">
    <property type="entry name" value="FeoC"/>
    <property type="match status" value="1"/>
</dbReference>
<dbReference type="SUPFAM" id="SSF46785">
    <property type="entry name" value="Winged helix' DNA-binding domain"/>
    <property type="match status" value="1"/>
</dbReference>
<organism>
    <name type="scientific">Shigella boydii serotype 4 (strain Sb227)</name>
    <dbReference type="NCBI Taxonomy" id="300268"/>
    <lineage>
        <taxon>Bacteria</taxon>
        <taxon>Pseudomonadati</taxon>
        <taxon>Pseudomonadota</taxon>
        <taxon>Gammaproteobacteria</taxon>
        <taxon>Enterobacterales</taxon>
        <taxon>Enterobacteriaceae</taxon>
        <taxon>Shigella</taxon>
    </lineage>
</organism>
<sequence>MASLIQVRDLLALRGRMEAAQISQTLNTPQPMINAMLQQLESMGKAVRIQEEPDGCLSGSCKSCPEGKACLREWWALR</sequence>
<gene>
    <name evidence="1" type="primary">feoC</name>
    <name type="ordered locus">SBO_3399</name>
</gene>
<reference key="1">
    <citation type="journal article" date="2005" name="Nucleic Acids Res.">
        <title>Genome dynamics and diversity of Shigella species, the etiologic agents of bacillary dysentery.</title>
        <authorList>
            <person name="Yang F."/>
            <person name="Yang J."/>
            <person name="Zhang X."/>
            <person name="Chen L."/>
            <person name="Jiang Y."/>
            <person name="Yan Y."/>
            <person name="Tang X."/>
            <person name="Wang J."/>
            <person name="Xiong Z."/>
            <person name="Dong J."/>
            <person name="Xue Y."/>
            <person name="Zhu Y."/>
            <person name="Xu X."/>
            <person name="Sun L."/>
            <person name="Chen S."/>
            <person name="Nie H."/>
            <person name="Peng J."/>
            <person name="Xu J."/>
            <person name="Wang Y."/>
            <person name="Yuan Z."/>
            <person name="Wen Y."/>
            <person name="Yao Z."/>
            <person name="Shen Y."/>
            <person name="Qiang B."/>
            <person name="Hou Y."/>
            <person name="Yu J."/>
            <person name="Jin Q."/>
        </authorList>
    </citation>
    <scope>NUCLEOTIDE SEQUENCE [LARGE SCALE GENOMIC DNA]</scope>
    <source>
        <strain>Sb227</strain>
    </source>
</reference>